<gene>
    <name evidence="1" type="primary">alaS</name>
    <name type="ordered locus">Rmag_0882</name>
</gene>
<accession>A1AXE0</accession>
<protein>
    <recommendedName>
        <fullName evidence="1">Alanine--tRNA ligase</fullName>
        <ecNumber evidence="1">6.1.1.7</ecNumber>
    </recommendedName>
    <alternativeName>
        <fullName evidence="1">Alanyl-tRNA synthetase</fullName>
        <shortName evidence="1">AlaRS</shortName>
    </alternativeName>
</protein>
<dbReference type="EC" id="6.1.1.7" evidence="1"/>
<dbReference type="EMBL" id="CP000488">
    <property type="protein sequence ID" value="ABL02597.1"/>
    <property type="molecule type" value="Genomic_DNA"/>
</dbReference>
<dbReference type="RefSeq" id="WP_011738222.1">
    <property type="nucleotide sequence ID" value="NC_008610.1"/>
</dbReference>
<dbReference type="SMR" id="A1AXE0"/>
<dbReference type="STRING" id="413404.Rmag_0882"/>
<dbReference type="KEGG" id="rma:Rmag_0882"/>
<dbReference type="eggNOG" id="COG0013">
    <property type="taxonomic scope" value="Bacteria"/>
</dbReference>
<dbReference type="HOGENOM" id="CLU_004485_1_1_6"/>
<dbReference type="OrthoDB" id="9803884at2"/>
<dbReference type="Proteomes" id="UP000002587">
    <property type="component" value="Chromosome"/>
</dbReference>
<dbReference type="GO" id="GO:0005829">
    <property type="term" value="C:cytosol"/>
    <property type="evidence" value="ECO:0007669"/>
    <property type="project" value="TreeGrafter"/>
</dbReference>
<dbReference type="GO" id="GO:0004813">
    <property type="term" value="F:alanine-tRNA ligase activity"/>
    <property type="evidence" value="ECO:0007669"/>
    <property type="project" value="UniProtKB-UniRule"/>
</dbReference>
<dbReference type="GO" id="GO:0002161">
    <property type="term" value="F:aminoacyl-tRNA deacylase activity"/>
    <property type="evidence" value="ECO:0007669"/>
    <property type="project" value="TreeGrafter"/>
</dbReference>
<dbReference type="GO" id="GO:0005524">
    <property type="term" value="F:ATP binding"/>
    <property type="evidence" value="ECO:0007669"/>
    <property type="project" value="UniProtKB-UniRule"/>
</dbReference>
<dbReference type="GO" id="GO:0000049">
    <property type="term" value="F:tRNA binding"/>
    <property type="evidence" value="ECO:0007669"/>
    <property type="project" value="UniProtKB-KW"/>
</dbReference>
<dbReference type="GO" id="GO:0008270">
    <property type="term" value="F:zinc ion binding"/>
    <property type="evidence" value="ECO:0007669"/>
    <property type="project" value="UniProtKB-UniRule"/>
</dbReference>
<dbReference type="GO" id="GO:0006419">
    <property type="term" value="P:alanyl-tRNA aminoacylation"/>
    <property type="evidence" value="ECO:0007669"/>
    <property type="project" value="UniProtKB-UniRule"/>
</dbReference>
<dbReference type="GO" id="GO:0045892">
    <property type="term" value="P:negative regulation of DNA-templated transcription"/>
    <property type="evidence" value="ECO:0007669"/>
    <property type="project" value="TreeGrafter"/>
</dbReference>
<dbReference type="CDD" id="cd00673">
    <property type="entry name" value="AlaRS_core"/>
    <property type="match status" value="1"/>
</dbReference>
<dbReference type="FunFam" id="2.40.30.130:FF:000001">
    <property type="entry name" value="Alanine--tRNA ligase"/>
    <property type="match status" value="1"/>
</dbReference>
<dbReference type="FunFam" id="3.10.310.40:FF:000001">
    <property type="entry name" value="Alanine--tRNA ligase"/>
    <property type="match status" value="1"/>
</dbReference>
<dbReference type="FunFam" id="3.30.54.20:FF:000001">
    <property type="entry name" value="Alanine--tRNA ligase"/>
    <property type="match status" value="1"/>
</dbReference>
<dbReference type="FunFam" id="3.30.930.10:FF:000004">
    <property type="entry name" value="Alanine--tRNA ligase"/>
    <property type="match status" value="1"/>
</dbReference>
<dbReference type="FunFam" id="3.30.980.10:FF:000004">
    <property type="entry name" value="Alanine--tRNA ligase, cytoplasmic"/>
    <property type="match status" value="1"/>
</dbReference>
<dbReference type="Gene3D" id="2.40.30.130">
    <property type="match status" value="1"/>
</dbReference>
<dbReference type="Gene3D" id="3.10.310.40">
    <property type="match status" value="1"/>
</dbReference>
<dbReference type="Gene3D" id="3.30.54.20">
    <property type="match status" value="1"/>
</dbReference>
<dbReference type="Gene3D" id="6.10.250.550">
    <property type="match status" value="1"/>
</dbReference>
<dbReference type="Gene3D" id="3.30.930.10">
    <property type="entry name" value="Bira Bifunctional Protein, Domain 2"/>
    <property type="match status" value="1"/>
</dbReference>
<dbReference type="Gene3D" id="3.30.980.10">
    <property type="entry name" value="Threonyl-trna Synthetase, Chain A, domain 2"/>
    <property type="match status" value="1"/>
</dbReference>
<dbReference type="HAMAP" id="MF_00036_B">
    <property type="entry name" value="Ala_tRNA_synth_B"/>
    <property type="match status" value="1"/>
</dbReference>
<dbReference type="InterPro" id="IPR045864">
    <property type="entry name" value="aa-tRNA-synth_II/BPL/LPL"/>
</dbReference>
<dbReference type="InterPro" id="IPR002318">
    <property type="entry name" value="Ala-tRNA-lgiase_IIc"/>
</dbReference>
<dbReference type="InterPro" id="IPR018162">
    <property type="entry name" value="Ala-tRNA-ligase_IIc_anticod-bd"/>
</dbReference>
<dbReference type="InterPro" id="IPR018165">
    <property type="entry name" value="Ala-tRNA-synth_IIc_core"/>
</dbReference>
<dbReference type="InterPro" id="IPR018164">
    <property type="entry name" value="Ala-tRNA-synth_IIc_N"/>
</dbReference>
<dbReference type="InterPro" id="IPR050058">
    <property type="entry name" value="Ala-tRNA_ligase"/>
</dbReference>
<dbReference type="InterPro" id="IPR023033">
    <property type="entry name" value="Ala_tRNA_ligase_euk/bac"/>
</dbReference>
<dbReference type="InterPro" id="IPR003156">
    <property type="entry name" value="DHHA1_dom"/>
</dbReference>
<dbReference type="InterPro" id="IPR000253">
    <property type="entry name" value="FHA_dom"/>
</dbReference>
<dbReference type="InterPro" id="IPR018163">
    <property type="entry name" value="Thr/Ala-tRNA-synth_IIc_edit"/>
</dbReference>
<dbReference type="InterPro" id="IPR009000">
    <property type="entry name" value="Transl_B-barrel_sf"/>
</dbReference>
<dbReference type="InterPro" id="IPR012947">
    <property type="entry name" value="tRNA_SAD"/>
</dbReference>
<dbReference type="NCBIfam" id="TIGR00344">
    <property type="entry name" value="alaS"/>
    <property type="match status" value="1"/>
</dbReference>
<dbReference type="PANTHER" id="PTHR11777:SF9">
    <property type="entry name" value="ALANINE--TRNA LIGASE, CYTOPLASMIC"/>
    <property type="match status" value="1"/>
</dbReference>
<dbReference type="PANTHER" id="PTHR11777">
    <property type="entry name" value="ALANYL-TRNA SYNTHETASE"/>
    <property type="match status" value="1"/>
</dbReference>
<dbReference type="Pfam" id="PF02272">
    <property type="entry name" value="DHHA1"/>
    <property type="match status" value="1"/>
</dbReference>
<dbReference type="Pfam" id="PF01411">
    <property type="entry name" value="tRNA-synt_2c"/>
    <property type="match status" value="1"/>
</dbReference>
<dbReference type="Pfam" id="PF07973">
    <property type="entry name" value="tRNA_SAD"/>
    <property type="match status" value="1"/>
</dbReference>
<dbReference type="PRINTS" id="PR00980">
    <property type="entry name" value="TRNASYNTHALA"/>
</dbReference>
<dbReference type="SMART" id="SM00863">
    <property type="entry name" value="tRNA_SAD"/>
    <property type="match status" value="1"/>
</dbReference>
<dbReference type="SUPFAM" id="SSF55681">
    <property type="entry name" value="Class II aaRS and biotin synthetases"/>
    <property type="match status" value="1"/>
</dbReference>
<dbReference type="SUPFAM" id="SSF101353">
    <property type="entry name" value="Putative anticodon-binding domain of alanyl-tRNA synthetase (AlaRS)"/>
    <property type="match status" value="1"/>
</dbReference>
<dbReference type="SUPFAM" id="SSF55186">
    <property type="entry name" value="ThrRS/AlaRS common domain"/>
    <property type="match status" value="1"/>
</dbReference>
<dbReference type="SUPFAM" id="SSF50447">
    <property type="entry name" value="Translation proteins"/>
    <property type="match status" value="1"/>
</dbReference>
<dbReference type="PROSITE" id="PS50860">
    <property type="entry name" value="AA_TRNA_LIGASE_II_ALA"/>
    <property type="match status" value="1"/>
</dbReference>
<reference key="1">
    <citation type="journal article" date="2007" name="Science">
        <title>The Calyptogena magnifica chemoautotrophic symbiont genome.</title>
        <authorList>
            <person name="Newton I.L.G."/>
            <person name="Woyke T."/>
            <person name="Auchtung T.A."/>
            <person name="Dilly G.F."/>
            <person name="Dutton R.J."/>
            <person name="Fisher M.C."/>
            <person name="Fontanez K.M."/>
            <person name="Lau E."/>
            <person name="Stewart F.J."/>
            <person name="Richardson P.M."/>
            <person name="Barry K.W."/>
            <person name="Saunders E."/>
            <person name="Detter J.C."/>
            <person name="Wu D."/>
            <person name="Eisen J.A."/>
            <person name="Cavanaugh C.M."/>
        </authorList>
    </citation>
    <scope>NUCLEOTIDE SEQUENCE [LARGE SCALE GENOMIC DNA]</scope>
</reference>
<organism>
    <name type="scientific">Ruthia magnifica subsp. Calyptogena magnifica</name>
    <dbReference type="NCBI Taxonomy" id="413404"/>
    <lineage>
        <taxon>Bacteria</taxon>
        <taxon>Pseudomonadati</taxon>
        <taxon>Pseudomonadota</taxon>
        <taxon>Gammaproteobacteria</taxon>
        <taxon>Candidatus Pseudothioglobaceae</taxon>
        <taxon>Candidatus Ruthturnera</taxon>
    </lineage>
</organism>
<feature type="chain" id="PRO_0000347771" description="Alanine--tRNA ligase">
    <location>
        <begin position="1"/>
        <end position="865"/>
    </location>
</feature>
<feature type="binding site" evidence="1">
    <location>
        <position position="556"/>
    </location>
    <ligand>
        <name>Zn(2+)</name>
        <dbReference type="ChEBI" id="CHEBI:29105"/>
    </ligand>
</feature>
<feature type="binding site" evidence="1">
    <location>
        <position position="560"/>
    </location>
    <ligand>
        <name>Zn(2+)</name>
        <dbReference type="ChEBI" id="CHEBI:29105"/>
    </ligand>
</feature>
<feature type="binding site" evidence="1">
    <location>
        <position position="660"/>
    </location>
    <ligand>
        <name>Zn(2+)</name>
        <dbReference type="ChEBI" id="CHEBI:29105"/>
    </ligand>
</feature>
<feature type="binding site" evidence="1">
    <location>
        <position position="664"/>
    </location>
    <ligand>
        <name>Zn(2+)</name>
        <dbReference type="ChEBI" id="CHEBI:29105"/>
    </ligand>
</feature>
<sequence>MKTAQIRQKFLDYFESKGHTIESSASLIPHNDKTLLFVNAGMVLFKDVFSGVEKRPYMRAVSVQRCVRAGGKHNDLENVGYTARHHTFFEMLGNFSFGDYFKREAIYYAWEFLTKELNLPKEKLWVSVFEEDDEAENIWINEIGFPKNRISRCGTKDNFWQMGDTGPCGPSSEIFYDYGEHIAGGPPGHADEDGDRYIEIWNLVFTQFDKQEDGHLKPLAVPCVDTGMGLERLAAVLQHKNNNYDTDGFQSLVKAIVNLTPKSNNIKNNNASVRVIADHIRSTAFMIVDGVNPSNEGRGYVLRRIIRRGIRHGHKMGIDKVFFYRLAPVLALEFKDAYPELKQALPKVEKVLKREEQRFSQTLDQGMRLLEDAITNLNGSEIDGKTVFKLYDTYGFPIDLTADIARERHLTIDMLGFEFEMTRQRDRARQAGDFKISKKNVDIIGVTEFLGYEQLENISSILALVKNSKLVEEIKAGEYGIVVLAQSSFYAESGGQVGDSGVLSNAKIEFKVDHTNKQKSGVFEHYGVLNKGVLKVGDTIQANVDKKSRKCIARNHSATHLLHAALRIVLGETVTQKGSLVDSEKLRFDFSHDEVITKSDINKIEGMINRKILGNTKVHTDIINIENAKKKDAIALFGEKYSDTVRVLTMGKDDFSVELCGGTHVKQLGDIGLFRITSESGVSAGVRRIEALTGYDAYQFDNQMQNSLSEISQMTKSNNAQVVEKVTQFIKQQKELEEQITIFQKQLTSNQGDDLIGQVQEVRNIKLLSTVVEGSSGKDLRNIADKLKDKLGSAVIVLAVVSNDKVSLVVGVTKDLTKRYQAVKILNYVAEQIGGKGGGRPDMAQGGGTQPEYLAKALASVKSLI</sequence>
<name>SYA_RUTMC</name>
<keyword id="KW-0030">Aminoacyl-tRNA synthetase</keyword>
<keyword id="KW-0067">ATP-binding</keyword>
<keyword id="KW-0963">Cytoplasm</keyword>
<keyword id="KW-0436">Ligase</keyword>
<keyword id="KW-0479">Metal-binding</keyword>
<keyword id="KW-0547">Nucleotide-binding</keyword>
<keyword id="KW-0648">Protein biosynthesis</keyword>
<keyword id="KW-0694">RNA-binding</keyword>
<keyword id="KW-0820">tRNA-binding</keyword>
<keyword id="KW-0862">Zinc</keyword>
<evidence type="ECO:0000255" key="1">
    <source>
        <dbReference type="HAMAP-Rule" id="MF_00036"/>
    </source>
</evidence>
<proteinExistence type="inferred from homology"/>
<comment type="function">
    <text evidence="1">Catalyzes the attachment of alanine to tRNA(Ala) in a two-step reaction: alanine is first activated by ATP to form Ala-AMP and then transferred to the acceptor end of tRNA(Ala). Also edits incorrectly charged Ser-tRNA(Ala) and Gly-tRNA(Ala) via its editing domain.</text>
</comment>
<comment type="catalytic activity">
    <reaction evidence="1">
        <text>tRNA(Ala) + L-alanine + ATP = L-alanyl-tRNA(Ala) + AMP + diphosphate</text>
        <dbReference type="Rhea" id="RHEA:12540"/>
        <dbReference type="Rhea" id="RHEA-COMP:9657"/>
        <dbReference type="Rhea" id="RHEA-COMP:9923"/>
        <dbReference type="ChEBI" id="CHEBI:30616"/>
        <dbReference type="ChEBI" id="CHEBI:33019"/>
        <dbReference type="ChEBI" id="CHEBI:57972"/>
        <dbReference type="ChEBI" id="CHEBI:78442"/>
        <dbReference type="ChEBI" id="CHEBI:78497"/>
        <dbReference type="ChEBI" id="CHEBI:456215"/>
        <dbReference type="EC" id="6.1.1.7"/>
    </reaction>
</comment>
<comment type="cofactor">
    <cofactor evidence="1">
        <name>Zn(2+)</name>
        <dbReference type="ChEBI" id="CHEBI:29105"/>
    </cofactor>
    <text evidence="1">Binds 1 zinc ion per subunit.</text>
</comment>
<comment type="subcellular location">
    <subcellularLocation>
        <location evidence="1">Cytoplasm</location>
    </subcellularLocation>
</comment>
<comment type="domain">
    <text evidence="1">Consists of three domains; the N-terminal catalytic domain, the editing domain and the C-terminal C-Ala domain. The editing domain removes incorrectly charged amino acids, while the C-Ala domain, along with tRNA(Ala), serves as a bridge to cooperatively bring together the editing and aminoacylation centers thus stimulating deacylation of misacylated tRNAs.</text>
</comment>
<comment type="similarity">
    <text evidence="1">Belongs to the class-II aminoacyl-tRNA synthetase family.</text>
</comment>